<sequence length="466" mass="50663">MAQNIGKVVQVIGPVVDVKFQKDKLPKLNNAVNIELNGHTLVIEVAQQLGDDIVRCIAMDSTDGLMRNQEAVDTGSAIQVPVGKATLGRMFNVLGEPIDGKPFDTKDVVMHPIHRHPPSFEEQQTQPEMFETGIKVVDLICPYVRGGKIGLFGGAGVGKTVLIQELINNIATQHGGLSVFAGVGERTREGNDLYYEMMESGVINKTALCFGQMNEPPGARMRIALAGLTMAEYFRDDEGQDVLLFIDNIFRFTQAGSEVSALLGRMPSAVGYQPTLATEMGALQERITSTSKGSITSVQAVYVPADDLTDPAPATTFAHLDATTVLSRAITEKGIYPAVDPLDSTSRILDPKIVGQEHYETAREVQEILQRYKELQDIIAILGMDELSDADKITVSRARKVERFLSQPFNVAEQFTGTAGVYVTIGDTIKGFKEILEGQHDDLPESAFLLVGTIEDAVVKAKKIKG</sequence>
<name>ATPB_ACEWD</name>
<gene>
    <name evidence="1" type="primary">atpD</name>
    <name type="synonym">uncD</name>
    <name type="ordered locus">Awo_c02230</name>
</gene>
<protein>
    <recommendedName>
        <fullName>ATP synthase subunit beta, sodium ion specific</fullName>
        <ecNumber>7.2.2.1</ecNumber>
    </recommendedName>
    <alternativeName>
        <fullName>Na(+)-translocating ATPase subunit beta</fullName>
    </alternativeName>
</protein>
<feature type="initiator methionine" description="Removed" evidence="2">
    <location>
        <position position="1"/>
    </location>
</feature>
<feature type="chain" id="PRO_0000144413" description="ATP synthase subunit beta, sodium ion specific">
    <location>
        <begin position="2"/>
        <end position="466"/>
    </location>
</feature>
<feature type="binding site" evidence="1">
    <location>
        <begin position="153"/>
        <end position="160"/>
    </location>
    <ligand>
        <name>ATP</name>
        <dbReference type="ChEBI" id="CHEBI:30616"/>
    </ligand>
</feature>
<feature type="sequence conflict" description="In Ref. 1; AAA79908." evidence="3" ref="1">
    <original>V</original>
    <variation>D</variation>
    <location>
        <position position="303"/>
    </location>
</feature>
<feature type="sequence conflict" description="In Ref. 1; AAA79908." evidence="3" ref="1">
    <original>FLSQPFNVAEQFTGTAGVYVTI</original>
    <variation>LFANHLMLRNSLPVRWGICKRF</variation>
    <location>
        <begin position="404"/>
        <end position="425"/>
    </location>
</feature>
<feature type="sequence conflict" description="In Ref. 1; AAA79908." evidence="3" ref="1">
    <original>E</original>
    <variation>Q</variation>
    <location>
        <position position="437"/>
    </location>
</feature>
<organism>
    <name type="scientific">Acetobacterium woodii (strain ATCC 29683 / DSM 1030 / JCM 2381 / KCTC 1655 / WB1)</name>
    <dbReference type="NCBI Taxonomy" id="931626"/>
    <lineage>
        <taxon>Bacteria</taxon>
        <taxon>Bacillati</taxon>
        <taxon>Bacillota</taxon>
        <taxon>Clostridia</taxon>
        <taxon>Eubacteriales</taxon>
        <taxon>Eubacteriaceae</taxon>
        <taxon>Acetobacterium</taxon>
    </lineage>
</organism>
<reference key="1">
    <citation type="journal article" date="1995" name="Biochim. Biophys. Acta">
        <title>The Na(+)-translocating ATPase of Acetobacterium woodii is a F1F0-type enzyme as deduced from the primary structure of its beta, gamma and epsilon subunits.</title>
        <authorList>
            <person name="Forster A."/>
            <person name="Daniel R."/>
            <person name="Mueller V."/>
        </authorList>
    </citation>
    <scope>NUCLEOTIDE SEQUENCE [GENOMIC DNA]</scope>
    <source>
        <strain>ATCC 29683 / DSM 1030 / JCM 2381 / KCTC 1655 / WB1</strain>
    </source>
</reference>
<reference key="2">
    <citation type="submission" date="2011-07" db="EMBL/GenBank/DDBJ databases">
        <title>Complete genome sequence of Acetobacterium woodii.</title>
        <authorList>
            <person name="Poehlein A."/>
            <person name="Schmidt S."/>
            <person name="Kaster A.-K."/>
            <person name="Goenrich M."/>
            <person name="Vollmers J."/>
            <person name="Thuermer A."/>
            <person name="Gottschalk G."/>
            <person name="Thauer R.K."/>
            <person name="Daniel R."/>
            <person name="Mueller V."/>
        </authorList>
    </citation>
    <scope>NUCLEOTIDE SEQUENCE [LARGE SCALE GENOMIC DNA]</scope>
    <source>
        <strain>ATCC 29683 / DSM 1030 / JCM 2381 / KCTC 1655 / WB1</strain>
    </source>
</reference>
<reference key="3">
    <citation type="journal article" date="1994" name="Eur. J. Biochem.">
        <title>Purification of ATP synthase from Acetobacterium woodii and identification as a Na(+)-translocating F1F0-type enzyme.</title>
        <authorList>
            <person name="Reidlinger J."/>
            <person name="Mueller V."/>
        </authorList>
    </citation>
    <scope>PROTEIN SEQUENCE OF 2-9</scope>
    <scope>SUBUNIT</scope>
    <scope>SUBCELLULAR LOCATION</scope>
    <source>
        <strain>ATCC 29683 / DSM 1030 / JCM 2381 / KCTC 1655 / WB1</strain>
    </source>
</reference>
<dbReference type="EC" id="7.2.2.1"/>
<dbReference type="EMBL" id="U10505">
    <property type="protein sequence ID" value="AAA79908.1"/>
    <property type="molecule type" value="Genomic_DNA"/>
</dbReference>
<dbReference type="EMBL" id="CP002987">
    <property type="protein sequence ID" value="AFA47032.1"/>
    <property type="molecule type" value="Genomic_DNA"/>
</dbReference>
<dbReference type="PIR" id="I39748">
    <property type="entry name" value="I39748"/>
</dbReference>
<dbReference type="RefSeq" id="WP_014354635.1">
    <property type="nucleotide sequence ID" value="NC_016894.1"/>
</dbReference>
<dbReference type="SMR" id="P50002"/>
<dbReference type="STRING" id="931626.Awo_c02230"/>
<dbReference type="TCDB" id="3.A.2.1.5">
    <property type="family name" value="the h+- or na+-translocating f-type, v-type and a-type atpase (f-atpase) superfamily"/>
</dbReference>
<dbReference type="KEGG" id="awo:Awo_c02230"/>
<dbReference type="eggNOG" id="COG0055">
    <property type="taxonomic scope" value="Bacteria"/>
</dbReference>
<dbReference type="HOGENOM" id="CLU_022398_0_2_9"/>
<dbReference type="OrthoDB" id="9801639at2"/>
<dbReference type="Proteomes" id="UP000007177">
    <property type="component" value="Chromosome"/>
</dbReference>
<dbReference type="GO" id="GO:0005886">
    <property type="term" value="C:plasma membrane"/>
    <property type="evidence" value="ECO:0007669"/>
    <property type="project" value="UniProtKB-SubCell"/>
</dbReference>
<dbReference type="GO" id="GO:0045259">
    <property type="term" value="C:proton-transporting ATP synthase complex"/>
    <property type="evidence" value="ECO:0007669"/>
    <property type="project" value="UniProtKB-KW"/>
</dbReference>
<dbReference type="GO" id="GO:0005524">
    <property type="term" value="F:ATP binding"/>
    <property type="evidence" value="ECO:0007669"/>
    <property type="project" value="UniProtKB-UniRule"/>
</dbReference>
<dbReference type="GO" id="GO:0016887">
    <property type="term" value="F:ATP hydrolysis activity"/>
    <property type="evidence" value="ECO:0007669"/>
    <property type="project" value="InterPro"/>
</dbReference>
<dbReference type="GO" id="GO:0046933">
    <property type="term" value="F:proton-transporting ATP synthase activity, rotational mechanism"/>
    <property type="evidence" value="ECO:0007669"/>
    <property type="project" value="UniProtKB-UniRule"/>
</dbReference>
<dbReference type="GO" id="GO:0046962">
    <property type="term" value="F:sodium-transporting ATPase activity, rotational mechanism"/>
    <property type="evidence" value="ECO:0007669"/>
    <property type="project" value="UniProtKB-EC"/>
</dbReference>
<dbReference type="CDD" id="cd18110">
    <property type="entry name" value="ATP-synt_F1_beta_C"/>
    <property type="match status" value="1"/>
</dbReference>
<dbReference type="CDD" id="cd18115">
    <property type="entry name" value="ATP-synt_F1_beta_N"/>
    <property type="match status" value="1"/>
</dbReference>
<dbReference type="CDD" id="cd01133">
    <property type="entry name" value="F1-ATPase_beta_CD"/>
    <property type="match status" value="1"/>
</dbReference>
<dbReference type="FunFam" id="1.10.1140.10:FF:000001">
    <property type="entry name" value="ATP synthase subunit beta"/>
    <property type="match status" value="1"/>
</dbReference>
<dbReference type="FunFam" id="2.40.10.170:FF:000005">
    <property type="entry name" value="ATP synthase subunit beta"/>
    <property type="match status" value="1"/>
</dbReference>
<dbReference type="FunFam" id="3.40.50.300:FF:000004">
    <property type="entry name" value="ATP synthase subunit beta"/>
    <property type="match status" value="1"/>
</dbReference>
<dbReference type="Gene3D" id="2.40.10.170">
    <property type="match status" value="1"/>
</dbReference>
<dbReference type="Gene3D" id="1.10.1140.10">
    <property type="entry name" value="Bovine Mitochondrial F1-atpase, Atp Synthase Beta Chain, Chain D, domain 3"/>
    <property type="match status" value="1"/>
</dbReference>
<dbReference type="Gene3D" id="3.40.50.300">
    <property type="entry name" value="P-loop containing nucleotide triphosphate hydrolases"/>
    <property type="match status" value="1"/>
</dbReference>
<dbReference type="HAMAP" id="MF_01347">
    <property type="entry name" value="ATP_synth_beta_bact"/>
    <property type="match status" value="1"/>
</dbReference>
<dbReference type="InterPro" id="IPR003593">
    <property type="entry name" value="AAA+_ATPase"/>
</dbReference>
<dbReference type="InterPro" id="IPR055190">
    <property type="entry name" value="ATP-synt_VA_C"/>
</dbReference>
<dbReference type="InterPro" id="IPR005722">
    <property type="entry name" value="ATP_synth_F1_bsu"/>
</dbReference>
<dbReference type="InterPro" id="IPR020003">
    <property type="entry name" value="ATPase_a/bsu_AS"/>
</dbReference>
<dbReference type="InterPro" id="IPR050053">
    <property type="entry name" value="ATPase_alpha/beta_chains"/>
</dbReference>
<dbReference type="InterPro" id="IPR004100">
    <property type="entry name" value="ATPase_F1/V1/A1_a/bsu_N"/>
</dbReference>
<dbReference type="InterPro" id="IPR036121">
    <property type="entry name" value="ATPase_F1/V1/A1_a/bsu_N_sf"/>
</dbReference>
<dbReference type="InterPro" id="IPR000194">
    <property type="entry name" value="ATPase_F1/V1/A1_a/bsu_nucl-bd"/>
</dbReference>
<dbReference type="InterPro" id="IPR024034">
    <property type="entry name" value="ATPase_F1/V1_b/a_C"/>
</dbReference>
<dbReference type="InterPro" id="IPR027417">
    <property type="entry name" value="P-loop_NTPase"/>
</dbReference>
<dbReference type="NCBIfam" id="TIGR01039">
    <property type="entry name" value="atpD"/>
    <property type="match status" value="1"/>
</dbReference>
<dbReference type="PANTHER" id="PTHR15184">
    <property type="entry name" value="ATP SYNTHASE"/>
    <property type="match status" value="1"/>
</dbReference>
<dbReference type="PANTHER" id="PTHR15184:SF71">
    <property type="entry name" value="ATP SYNTHASE SUBUNIT BETA, MITOCHONDRIAL"/>
    <property type="match status" value="1"/>
</dbReference>
<dbReference type="Pfam" id="PF00006">
    <property type="entry name" value="ATP-synt_ab"/>
    <property type="match status" value="1"/>
</dbReference>
<dbReference type="Pfam" id="PF02874">
    <property type="entry name" value="ATP-synt_ab_N"/>
    <property type="match status" value="1"/>
</dbReference>
<dbReference type="Pfam" id="PF22919">
    <property type="entry name" value="ATP-synt_VA_C"/>
    <property type="match status" value="1"/>
</dbReference>
<dbReference type="SMART" id="SM00382">
    <property type="entry name" value="AAA"/>
    <property type="match status" value="1"/>
</dbReference>
<dbReference type="SUPFAM" id="SSF47917">
    <property type="entry name" value="C-terminal domain of alpha and beta subunits of F1 ATP synthase"/>
    <property type="match status" value="1"/>
</dbReference>
<dbReference type="SUPFAM" id="SSF50615">
    <property type="entry name" value="N-terminal domain of alpha and beta subunits of F1 ATP synthase"/>
    <property type="match status" value="1"/>
</dbReference>
<dbReference type="SUPFAM" id="SSF52540">
    <property type="entry name" value="P-loop containing nucleoside triphosphate hydrolases"/>
    <property type="match status" value="1"/>
</dbReference>
<dbReference type="PROSITE" id="PS00152">
    <property type="entry name" value="ATPASE_ALPHA_BETA"/>
    <property type="match status" value="1"/>
</dbReference>
<accession>P50002</accession>
<accession>H6LG96</accession>
<comment type="function">
    <text>Produces ATP from ADP in the presence of a sodium ion gradient across the membrane. The beta chain is the catalytic subunit.</text>
</comment>
<comment type="catalytic activity">
    <reaction>
        <text>4 Na(+)(in) + ATP + H2O = 4 Na(+)(out) + ADP + phosphate + H(+)</text>
        <dbReference type="Rhea" id="RHEA:58156"/>
        <dbReference type="ChEBI" id="CHEBI:15377"/>
        <dbReference type="ChEBI" id="CHEBI:15378"/>
        <dbReference type="ChEBI" id="CHEBI:29101"/>
        <dbReference type="ChEBI" id="CHEBI:30616"/>
        <dbReference type="ChEBI" id="CHEBI:43474"/>
        <dbReference type="ChEBI" id="CHEBI:456216"/>
        <dbReference type="EC" id="7.2.2.1"/>
    </reaction>
</comment>
<comment type="activity regulation">
    <text>Inhibited by nitrate.</text>
</comment>
<comment type="subunit">
    <text evidence="2">F-type ATPases have 2 components, CF(1) - the catalytic core - and CF(0) - the membrane proton channel. CF(1) has five subunits: alpha(3), beta(3), gamma(1), delta(1), epsilon(1). CF(0) has three main subunits: a, b and c.</text>
</comment>
<comment type="subcellular location">
    <subcellularLocation>
        <location evidence="1 2">Cell membrane</location>
        <topology evidence="1 2">Peripheral membrane protein</topology>
    </subcellularLocation>
</comment>
<comment type="similarity">
    <text evidence="1">Belongs to the ATPase alpha/beta chains family.</text>
</comment>
<evidence type="ECO:0000255" key="1">
    <source>
        <dbReference type="HAMAP-Rule" id="MF_01347"/>
    </source>
</evidence>
<evidence type="ECO:0000269" key="2">
    <source>
    </source>
</evidence>
<evidence type="ECO:0000305" key="3"/>
<proteinExistence type="evidence at protein level"/>
<keyword id="KW-0066">ATP synthesis</keyword>
<keyword id="KW-0067">ATP-binding</keyword>
<keyword id="KW-1003">Cell membrane</keyword>
<keyword id="KW-0139">CF(1)</keyword>
<keyword id="KW-0903">Direct protein sequencing</keyword>
<keyword id="KW-0406">Ion transport</keyword>
<keyword id="KW-0472">Membrane</keyword>
<keyword id="KW-0547">Nucleotide-binding</keyword>
<keyword id="KW-1185">Reference proteome</keyword>
<keyword id="KW-0915">Sodium</keyword>
<keyword id="KW-0739">Sodium transport</keyword>
<keyword id="KW-1278">Translocase</keyword>
<keyword id="KW-0813">Transport</keyword>